<gene>
    <name evidence="1" type="primary">tdcD</name>
    <name type="ordered locus">STMMW_32421</name>
</gene>
<protein>
    <recommendedName>
        <fullName evidence="1">Propionate kinase</fullName>
        <ecNumber evidence="1">2.7.2.15</ecNumber>
    </recommendedName>
</protein>
<dbReference type="EC" id="2.7.2.15" evidence="1"/>
<dbReference type="EMBL" id="FN424405">
    <property type="protein sequence ID" value="CBG26245.1"/>
    <property type="molecule type" value="Genomic_DNA"/>
</dbReference>
<dbReference type="RefSeq" id="WP_001001853.1">
    <property type="nucleotide sequence ID" value="NC_016854.1"/>
</dbReference>
<dbReference type="SMR" id="C9XHG0"/>
<dbReference type="KEGG" id="sev:STMMW_32421"/>
<dbReference type="PATRIC" id="fig|568708.3.peg.3456"/>
<dbReference type="HOGENOM" id="CLU_020352_0_1_6"/>
<dbReference type="BioCyc" id="SENT568708:STMMW_RS16785-MONOMER"/>
<dbReference type="UniPathway" id="UPA00052">
    <property type="reaction ID" value="UER00510"/>
</dbReference>
<dbReference type="Proteomes" id="UP000002622">
    <property type="component" value="Chromosome"/>
</dbReference>
<dbReference type="GO" id="GO:0005829">
    <property type="term" value="C:cytosol"/>
    <property type="evidence" value="ECO:0007669"/>
    <property type="project" value="TreeGrafter"/>
</dbReference>
<dbReference type="GO" id="GO:0008776">
    <property type="term" value="F:acetate kinase activity"/>
    <property type="evidence" value="ECO:0007669"/>
    <property type="project" value="TreeGrafter"/>
</dbReference>
<dbReference type="GO" id="GO:0005524">
    <property type="term" value="F:ATP binding"/>
    <property type="evidence" value="ECO:0007669"/>
    <property type="project" value="UniProtKB-KW"/>
</dbReference>
<dbReference type="GO" id="GO:0046872">
    <property type="term" value="F:metal ion binding"/>
    <property type="evidence" value="ECO:0007669"/>
    <property type="project" value="UniProtKB-KW"/>
</dbReference>
<dbReference type="GO" id="GO:0008980">
    <property type="term" value="F:propionate kinase activity"/>
    <property type="evidence" value="ECO:0007669"/>
    <property type="project" value="UniProtKB-UniRule"/>
</dbReference>
<dbReference type="GO" id="GO:0006083">
    <property type="term" value="P:acetate metabolic process"/>
    <property type="evidence" value="ECO:0007669"/>
    <property type="project" value="TreeGrafter"/>
</dbReference>
<dbReference type="GO" id="GO:0070689">
    <property type="term" value="P:L-threonine catabolic process to propionate"/>
    <property type="evidence" value="ECO:0007669"/>
    <property type="project" value="UniProtKB-UniRule"/>
</dbReference>
<dbReference type="CDD" id="cd24010">
    <property type="entry name" value="ASKHA_NBD_AcK_PK"/>
    <property type="match status" value="1"/>
</dbReference>
<dbReference type="Gene3D" id="3.30.420.40">
    <property type="match status" value="2"/>
</dbReference>
<dbReference type="HAMAP" id="MF_00020">
    <property type="entry name" value="Acetate_kinase"/>
    <property type="match status" value="1"/>
</dbReference>
<dbReference type="HAMAP" id="MF_01881">
    <property type="entry name" value="Propion_kin_subfam1"/>
    <property type="match status" value="1"/>
</dbReference>
<dbReference type="InterPro" id="IPR004372">
    <property type="entry name" value="Ac/propionate_kinase"/>
</dbReference>
<dbReference type="InterPro" id="IPR000890">
    <property type="entry name" value="Aliphatic_acid_kin_short-chain"/>
</dbReference>
<dbReference type="InterPro" id="IPR023865">
    <property type="entry name" value="Aliphatic_acid_kinase_CS"/>
</dbReference>
<dbReference type="InterPro" id="IPR043129">
    <property type="entry name" value="ATPase_NBD"/>
</dbReference>
<dbReference type="InterPro" id="IPR024917">
    <property type="entry name" value="Propionate_kinase"/>
</dbReference>
<dbReference type="NCBIfam" id="TIGR00016">
    <property type="entry name" value="ackA"/>
    <property type="match status" value="1"/>
</dbReference>
<dbReference type="NCBIfam" id="NF009045">
    <property type="entry name" value="PRK12379.1"/>
    <property type="match status" value="1"/>
</dbReference>
<dbReference type="PANTHER" id="PTHR21060">
    <property type="entry name" value="ACETATE KINASE"/>
    <property type="match status" value="1"/>
</dbReference>
<dbReference type="PANTHER" id="PTHR21060:SF17">
    <property type="entry name" value="PROPIONATE KINASE"/>
    <property type="match status" value="1"/>
</dbReference>
<dbReference type="Pfam" id="PF00871">
    <property type="entry name" value="Acetate_kinase"/>
    <property type="match status" value="1"/>
</dbReference>
<dbReference type="PIRSF" id="PIRSF000722">
    <property type="entry name" value="Acetate_prop_kin"/>
    <property type="match status" value="1"/>
</dbReference>
<dbReference type="PRINTS" id="PR00471">
    <property type="entry name" value="ACETATEKNASE"/>
</dbReference>
<dbReference type="SUPFAM" id="SSF53067">
    <property type="entry name" value="Actin-like ATPase domain"/>
    <property type="match status" value="2"/>
</dbReference>
<dbReference type="PROSITE" id="PS01075">
    <property type="entry name" value="ACETATE_KINASE_1"/>
    <property type="match status" value="1"/>
</dbReference>
<dbReference type="PROSITE" id="PS01076">
    <property type="entry name" value="ACETATE_KINASE_2"/>
    <property type="match status" value="1"/>
</dbReference>
<evidence type="ECO:0000255" key="1">
    <source>
        <dbReference type="HAMAP-Rule" id="MF_01881"/>
    </source>
</evidence>
<feature type="chain" id="PRO_0000398209" description="Propionate kinase">
    <location>
        <begin position="1"/>
        <end position="402"/>
    </location>
</feature>
<feature type="active site" description="Proton donor/acceptor" evidence="1">
    <location>
        <position position="143"/>
    </location>
</feature>
<feature type="binding site" evidence="1">
    <location>
        <position position="11"/>
    </location>
    <ligand>
        <name>ATP</name>
        <dbReference type="ChEBI" id="CHEBI:30616"/>
    </ligand>
</feature>
<feature type="binding site" evidence="1">
    <location>
        <position position="11"/>
    </location>
    <ligand>
        <name>Mg(2+)</name>
        <dbReference type="ChEBI" id="CHEBI:18420"/>
    </ligand>
</feature>
<feature type="binding site" evidence="1">
    <location>
        <position position="18"/>
    </location>
    <ligand>
        <name>ATP</name>
        <dbReference type="ChEBI" id="CHEBI:30616"/>
    </ligand>
</feature>
<feature type="binding site" evidence="1">
    <location>
        <position position="86"/>
    </location>
    <ligand>
        <name>substrate</name>
    </ligand>
</feature>
<feature type="binding site" evidence="1">
    <location>
        <position position="175"/>
    </location>
    <ligand>
        <name>ATP</name>
        <dbReference type="ChEBI" id="CHEBI:30616"/>
    </ligand>
</feature>
<feature type="binding site" evidence="1">
    <location>
        <begin position="203"/>
        <end position="207"/>
    </location>
    <ligand>
        <name>ATP</name>
        <dbReference type="ChEBI" id="CHEBI:30616"/>
    </ligand>
</feature>
<feature type="binding site" evidence="1">
    <location>
        <begin position="278"/>
        <end position="280"/>
    </location>
    <ligand>
        <name>ATP</name>
        <dbReference type="ChEBI" id="CHEBI:30616"/>
    </ligand>
</feature>
<feature type="binding site" evidence="1">
    <location>
        <begin position="326"/>
        <end position="330"/>
    </location>
    <ligand>
        <name>ATP</name>
        <dbReference type="ChEBI" id="CHEBI:30616"/>
    </ligand>
</feature>
<feature type="site" description="Transition state stabilizer" evidence="1">
    <location>
        <position position="175"/>
    </location>
</feature>
<feature type="site" description="Transition state stabilizer" evidence="1">
    <location>
        <position position="236"/>
    </location>
</feature>
<reference key="1">
    <citation type="journal article" date="2009" name="Genome Res.">
        <title>Epidemic multiple drug resistant Salmonella typhimurium causing invasive disease in sub-Saharan Africa have a distinct genotype.</title>
        <authorList>
            <person name="Kingsley R.A."/>
            <person name="Msefula C.L."/>
            <person name="Thomson N.R."/>
            <person name="Kariuki S."/>
            <person name="Holt K.E."/>
            <person name="Gordon M.A."/>
            <person name="Harris D."/>
            <person name="Clarke L."/>
            <person name="Whitehead S."/>
            <person name="Sangal V."/>
            <person name="Marsh K."/>
            <person name="Achtman M."/>
            <person name="Molyneux M.E."/>
            <person name="Cormican M."/>
            <person name="Parkhill J."/>
            <person name="Maclennan C.A."/>
            <person name="Heyderman R.S."/>
            <person name="Dougan G."/>
        </authorList>
    </citation>
    <scope>NUCLEOTIDE SEQUENCE [LARGE SCALE GENOMIC DNA]</scope>
    <source>
        <strain>D23580</strain>
    </source>
</reference>
<proteinExistence type="inferred from homology"/>
<comment type="function">
    <text evidence="1">Catalyzes the conversion of propionyl phosphate and ADP to propionate and ATP.</text>
</comment>
<comment type="catalytic activity">
    <reaction evidence="1">
        <text>propanoate + ATP = propanoyl phosphate + ADP</text>
        <dbReference type="Rhea" id="RHEA:23148"/>
        <dbReference type="ChEBI" id="CHEBI:17272"/>
        <dbReference type="ChEBI" id="CHEBI:30616"/>
        <dbReference type="ChEBI" id="CHEBI:58933"/>
        <dbReference type="ChEBI" id="CHEBI:456216"/>
        <dbReference type="EC" id="2.7.2.15"/>
    </reaction>
</comment>
<comment type="cofactor">
    <cofactor evidence="1">
        <name>Mg(2+)</name>
        <dbReference type="ChEBI" id="CHEBI:18420"/>
    </cofactor>
</comment>
<comment type="pathway">
    <text evidence="1">Amino-acid degradation; L-threonine degradation via propanoate pathway; propanoate from L-threonine: step 4/4.</text>
</comment>
<comment type="subunit">
    <text evidence="1">Homodimer.</text>
</comment>
<comment type="similarity">
    <text evidence="1">Belongs to the acetokinase family. TdcD subfamily.</text>
</comment>
<keyword id="KW-0067">ATP-binding</keyword>
<keyword id="KW-0418">Kinase</keyword>
<keyword id="KW-0460">Magnesium</keyword>
<keyword id="KW-0479">Metal-binding</keyword>
<keyword id="KW-0547">Nucleotide-binding</keyword>
<keyword id="KW-0808">Transferase</keyword>
<sequence>MNEFPVVLVINCGSSSIKFSVLDVATCDVLMAGIADGMNTENAFLSINGDKPINLAHSNYEDALKAIAFELEKRDLTDSVALIGHRIAHGGELFTQSVIITDEIIDNIRRVSPLAPLHNYANLSGIDAARHLFPAVRQVAVFDTSFHQTLAPEAYLYGLPWEYFSSLGVRRYGFHGTSHRYVSRRAYELLDLDEKDSGLIVAHLGNGASICAVRNGQSVDTSMGMTPLEGLMMGTRSGDVDFGAMAWIAKETGQTLSDLERVVNKESGLLGISGLSSDLRVLEKAWHEGHERARLAIKTFVHRIARHIAGHAASLHRLDGIIFTGGIGENSVLIRQLVIEHLGVLGLTLDVEMNKQPNSHGERIISANPSQVICAVIPTNEEKMIALDAIHLGNVKAPVEFA</sequence>
<name>TDCD_SALTD</name>
<accession>C9XHG0</accession>
<organism>
    <name type="scientific">Salmonella typhimurium (strain D23580)</name>
    <dbReference type="NCBI Taxonomy" id="568708"/>
    <lineage>
        <taxon>Bacteria</taxon>
        <taxon>Pseudomonadati</taxon>
        <taxon>Pseudomonadota</taxon>
        <taxon>Gammaproteobacteria</taxon>
        <taxon>Enterobacterales</taxon>
        <taxon>Enterobacteriaceae</taxon>
        <taxon>Salmonella</taxon>
    </lineage>
</organism>